<proteinExistence type="inferred from homology"/>
<accession>Q8IRU4</accession>
<reference evidence="8" key="1">
    <citation type="journal article" date="2000" name="Science">
        <title>The genome sequence of Drosophila melanogaster.</title>
        <authorList>
            <person name="Adams M.D."/>
            <person name="Celniker S.E."/>
            <person name="Holt R.A."/>
            <person name="Evans C.A."/>
            <person name="Gocayne J.D."/>
            <person name="Amanatides P.G."/>
            <person name="Scherer S.E."/>
            <person name="Li P.W."/>
            <person name="Hoskins R.A."/>
            <person name="Galle R.F."/>
            <person name="George R.A."/>
            <person name="Lewis S.E."/>
            <person name="Richards S."/>
            <person name="Ashburner M."/>
            <person name="Henderson S.N."/>
            <person name="Sutton G.G."/>
            <person name="Wortman J.R."/>
            <person name="Yandell M.D."/>
            <person name="Zhang Q."/>
            <person name="Chen L.X."/>
            <person name="Brandon R.C."/>
            <person name="Rogers Y.-H.C."/>
            <person name="Blazej R.G."/>
            <person name="Champe M."/>
            <person name="Pfeiffer B.D."/>
            <person name="Wan K.H."/>
            <person name="Doyle C."/>
            <person name="Baxter E.G."/>
            <person name="Helt G."/>
            <person name="Nelson C.R."/>
            <person name="Miklos G.L.G."/>
            <person name="Abril J.F."/>
            <person name="Agbayani A."/>
            <person name="An H.-J."/>
            <person name="Andrews-Pfannkoch C."/>
            <person name="Baldwin D."/>
            <person name="Ballew R.M."/>
            <person name="Basu A."/>
            <person name="Baxendale J."/>
            <person name="Bayraktaroglu L."/>
            <person name="Beasley E.M."/>
            <person name="Beeson K.Y."/>
            <person name="Benos P.V."/>
            <person name="Berman B.P."/>
            <person name="Bhandari D."/>
            <person name="Bolshakov S."/>
            <person name="Borkova D."/>
            <person name="Botchan M.R."/>
            <person name="Bouck J."/>
            <person name="Brokstein P."/>
            <person name="Brottier P."/>
            <person name="Burtis K.C."/>
            <person name="Busam D.A."/>
            <person name="Butler H."/>
            <person name="Cadieu E."/>
            <person name="Center A."/>
            <person name="Chandra I."/>
            <person name="Cherry J.M."/>
            <person name="Cawley S."/>
            <person name="Dahlke C."/>
            <person name="Davenport L.B."/>
            <person name="Davies P."/>
            <person name="de Pablos B."/>
            <person name="Delcher A."/>
            <person name="Deng Z."/>
            <person name="Mays A.D."/>
            <person name="Dew I."/>
            <person name="Dietz S.M."/>
            <person name="Dodson K."/>
            <person name="Doup L.E."/>
            <person name="Downes M."/>
            <person name="Dugan-Rocha S."/>
            <person name="Dunkov B.C."/>
            <person name="Dunn P."/>
            <person name="Durbin K.J."/>
            <person name="Evangelista C.C."/>
            <person name="Ferraz C."/>
            <person name="Ferriera S."/>
            <person name="Fleischmann W."/>
            <person name="Fosler C."/>
            <person name="Gabrielian A.E."/>
            <person name="Garg N.S."/>
            <person name="Gelbart W.M."/>
            <person name="Glasser K."/>
            <person name="Glodek A."/>
            <person name="Gong F."/>
            <person name="Gorrell J.H."/>
            <person name="Gu Z."/>
            <person name="Guan P."/>
            <person name="Harris M."/>
            <person name="Harris N.L."/>
            <person name="Harvey D.A."/>
            <person name="Heiman T.J."/>
            <person name="Hernandez J.R."/>
            <person name="Houck J."/>
            <person name="Hostin D."/>
            <person name="Houston K.A."/>
            <person name="Howland T.J."/>
            <person name="Wei M.-H."/>
            <person name="Ibegwam C."/>
            <person name="Jalali M."/>
            <person name="Kalush F."/>
            <person name="Karpen G.H."/>
            <person name="Ke Z."/>
            <person name="Kennison J.A."/>
            <person name="Ketchum K.A."/>
            <person name="Kimmel B.E."/>
            <person name="Kodira C.D."/>
            <person name="Kraft C.L."/>
            <person name="Kravitz S."/>
            <person name="Kulp D."/>
            <person name="Lai Z."/>
            <person name="Lasko P."/>
            <person name="Lei Y."/>
            <person name="Levitsky A.A."/>
            <person name="Li J.H."/>
            <person name="Li Z."/>
            <person name="Liang Y."/>
            <person name="Lin X."/>
            <person name="Liu X."/>
            <person name="Mattei B."/>
            <person name="McIntosh T.C."/>
            <person name="McLeod M.P."/>
            <person name="McPherson D."/>
            <person name="Merkulov G."/>
            <person name="Milshina N.V."/>
            <person name="Mobarry C."/>
            <person name="Morris J."/>
            <person name="Moshrefi A."/>
            <person name="Mount S.M."/>
            <person name="Moy M."/>
            <person name="Murphy B."/>
            <person name="Murphy L."/>
            <person name="Muzny D.M."/>
            <person name="Nelson D.L."/>
            <person name="Nelson D.R."/>
            <person name="Nelson K.A."/>
            <person name="Nixon K."/>
            <person name="Nusskern D.R."/>
            <person name="Pacleb J.M."/>
            <person name="Palazzolo M."/>
            <person name="Pittman G.S."/>
            <person name="Pan S."/>
            <person name="Pollard J."/>
            <person name="Puri V."/>
            <person name="Reese M.G."/>
            <person name="Reinert K."/>
            <person name="Remington K."/>
            <person name="Saunders R.D.C."/>
            <person name="Scheeler F."/>
            <person name="Shen H."/>
            <person name="Shue B.C."/>
            <person name="Siden-Kiamos I."/>
            <person name="Simpson M."/>
            <person name="Skupski M.P."/>
            <person name="Smith T.J."/>
            <person name="Spier E."/>
            <person name="Spradling A.C."/>
            <person name="Stapleton M."/>
            <person name="Strong R."/>
            <person name="Sun E."/>
            <person name="Svirskas R."/>
            <person name="Tector C."/>
            <person name="Turner R."/>
            <person name="Venter E."/>
            <person name="Wang A.H."/>
            <person name="Wang X."/>
            <person name="Wang Z.-Y."/>
            <person name="Wassarman D.A."/>
            <person name="Weinstock G.M."/>
            <person name="Weissenbach J."/>
            <person name="Williams S.M."/>
            <person name="Woodage T."/>
            <person name="Worley K.C."/>
            <person name="Wu D."/>
            <person name="Yang S."/>
            <person name="Yao Q.A."/>
            <person name="Ye J."/>
            <person name="Yeh R.-F."/>
            <person name="Zaveri J.S."/>
            <person name="Zhan M."/>
            <person name="Zhang G."/>
            <person name="Zhao Q."/>
            <person name="Zheng L."/>
            <person name="Zheng X.H."/>
            <person name="Zhong F.N."/>
            <person name="Zhong W."/>
            <person name="Zhou X."/>
            <person name="Zhu S.C."/>
            <person name="Zhu X."/>
            <person name="Smith H.O."/>
            <person name="Gibbs R.A."/>
            <person name="Myers E.W."/>
            <person name="Rubin G.M."/>
            <person name="Venter J.C."/>
        </authorList>
    </citation>
    <scope>NUCLEOTIDE SEQUENCE [LARGE SCALE GENOMIC DNA]</scope>
    <source>
        <strain evidence="5">Berkeley</strain>
    </source>
</reference>
<reference evidence="7 8" key="2">
    <citation type="journal article" date="2002" name="Genome Biol.">
        <title>Annotation of the Drosophila melanogaster euchromatic genome: a systematic review.</title>
        <authorList>
            <person name="Misra S."/>
            <person name="Crosby M.A."/>
            <person name="Mungall C.J."/>
            <person name="Matthews B.B."/>
            <person name="Campbell K.S."/>
            <person name="Hradecky P."/>
            <person name="Huang Y."/>
            <person name="Kaminker J.S."/>
            <person name="Millburn G.H."/>
            <person name="Prochnik S.E."/>
            <person name="Smith C.D."/>
            <person name="Tupy J.L."/>
            <person name="Whitfield E.J."/>
            <person name="Bayraktaroglu L."/>
            <person name="Berman B.P."/>
            <person name="Bettencourt B.R."/>
            <person name="Celniker S.E."/>
            <person name="de Grey A.D.N.J."/>
            <person name="Drysdale R.A."/>
            <person name="Harris N.L."/>
            <person name="Richter J."/>
            <person name="Russo S."/>
            <person name="Schroeder A.J."/>
            <person name="Shu S.Q."/>
            <person name="Stapleton M."/>
            <person name="Yamada C."/>
            <person name="Ashburner M."/>
            <person name="Gelbart W.M."/>
            <person name="Rubin G.M."/>
            <person name="Lewis S.E."/>
        </authorList>
    </citation>
    <scope>GENOME REANNOTATION</scope>
    <scope>ALTERNATIVE SPLICING</scope>
    <source>
        <strain>Berkeley</strain>
    </source>
</reference>
<organism>
    <name type="scientific">Drosophila melanogaster</name>
    <name type="common">Fruit fly</name>
    <dbReference type="NCBI Taxonomy" id="7227"/>
    <lineage>
        <taxon>Eukaryota</taxon>
        <taxon>Metazoa</taxon>
        <taxon>Ecdysozoa</taxon>
        <taxon>Arthropoda</taxon>
        <taxon>Hexapoda</taxon>
        <taxon>Insecta</taxon>
        <taxon>Pterygota</taxon>
        <taxon>Neoptera</taxon>
        <taxon>Endopterygota</taxon>
        <taxon>Diptera</taxon>
        <taxon>Brachycera</taxon>
        <taxon>Muscomorpha</taxon>
        <taxon>Ephydroidea</taxon>
        <taxon>Drosophilidae</taxon>
        <taxon>Drosophila</taxon>
        <taxon>Sophophora</taxon>
    </lineage>
</organism>
<sequence length="662" mass="72954">MLNKNSASSQSLPRVHSFFNMIPSIMQDDLALTILNDRDNMFSIKSQRSHGEDLIVTPFAQILASLRSVRNNLLSLTNVPASNKSRRPNQSSSASRSGNPPGAPLSQGEEAYTRLATDTIEELDWCLDQLETIQTHRSVSDMASLKFKRMLNKELSHFSESSRSGNQISEYICSTFLDKQQEFDLPSLRVEDNPELVAANAAAGQQSAGQYARSRSPRGPPMSQISGVKRPLSHTNSFTGERLPTFGVETPRENELGTLLGELDTWGIQIFSIGEFSVNRPLTCVAYTIFQSRELLTSLMIPPKTFLNFMSTLEDHYVKDNPFHNSLHAADVTQSTNVLLNTPALEGVFTPLEVGGALFAACIHDVDHPGLTNQFLVNSSSELALMYNDESVLENHHLAVAFKLLQNQGCDIFCNMQKKQRQTLRKMVIDIVLSTDMSKHMSLLADLKTMVETKKVAGSGVLLLDNYTDRIQVLENLVHCADLSNPTKPLPLYKRWVALLMEEFFLQGDKERESGMDISPMCDRHNATIEKSQVGFIDYIVHPLWETWADLVHPDAQDILDTLEENRDYYQSMIPPSPPPSGVDENPQEDRIRFQVTLEESDQENLAELEEGDESGGESTTTGTTGTTAASALSGAGGGGGGGGGMAPRTGGCQNQPQHGGM</sequence>
<keyword id="KW-0024">Alternative initiation</keyword>
<keyword id="KW-0025">Alternative splicing</keyword>
<keyword id="KW-0114">cAMP</keyword>
<keyword id="KW-0378">Hydrolase</keyword>
<keyword id="KW-0479">Metal-binding</keyword>
<keyword id="KW-1185">Reference proteome</keyword>
<protein>
    <recommendedName>
        <fullName evidence="7">3',5'-cyclic-AMP phosphodiesterase, isoform F</fullName>
        <ecNumber>3.1.4.53</ecNumber>
    </recommendedName>
    <alternativeName>
        <fullName>Learning/memory process protein</fullName>
    </alternativeName>
    <alternativeName>
        <fullName>Protein dunce</fullName>
    </alternativeName>
    <alternativeName>
        <fullName evidence="7">cAMP-specific phosphodiesterase, isoform F</fullName>
    </alternativeName>
</protein>
<gene>
    <name evidence="8" type="primary">dnc</name>
    <name type="ORF">CG32498</name>
</gene>
<name>PDE4E_DROME</name>
<feature type="chain" id="PRO_0000198820" description="3',5'-cyclic-AMP phosphodiesterase, isoform F">
    <location>
        <begin position="1"/>
        <end position="662"/>
    </location>
</feature>
<feature type="domain" description="PDEase" evidence="3">
    <location>
        <begin position="248"/>
        <end position="577"/>
    </location>
</feature>
<feature type="region of interest" description="Disordered" evidence="4">
    <location>
        <begin position="79"/>
        <end position="108"/>
    </location>
</feature>
<feature type="region of interest" description="Disordered" evidence="4">
    <location>
        <begin position="207"/>
        <end position="245"/>
    </location>
</feature>
<feature type="region of interest" description="Disordered" evidence="4">
    <location>
        <begin position="599"/>
        <end position="662"/>
    </location>
</feature>
<feature type="compositionally biased region" description="Polar residues" evidence="4">
    <location>
        <begin position="80"/>
        <end position="98"/>
    </location>
</feature>
<feature type="compositionally biased region" description="Acidic residues" evidence="4">
    <location>
        <begin position="599"/>
        <end position="616"/>
    </location>
</feature>
<feature type="compositionally biased region" description="Low complexity" evidence="4">
    <location>
        <begin position="617"/>
        <end position="634"/>
    </location>
</feature>
<feature type="compositionally biased region" description="Gly residues" evidence="4">
    <location>
        <begin position="635"/>
        <end position="646"/>
    </location>
</feature>
<feature type="compositionally biased region" description="Polar residues" evidence="4">
    <location>
        <begin position="652"/>
        <end position="662"/>
    </location>
</feature>
<feature type="active site" description="Proton donor" evidence="1">
    <location>
        <position position="324"/>
    </location>
</feature>
<feature type="binding site" evidence="1">
    <location>
        <begin position="324"/>
        <end position="328"/>
    </location>
    <ligand>
        <name>3',5'-cyclic AMP</name>
        <dbReference type="ChEBI" id="CHEBI:58165"/>
    </ligand>
</feature>
<feature type="binding site" evidence="1">
    <location>
        <position position="328"/>
    </location>
    <ligand>
        <name>a divalent metal cation</name>
        <dbReference type="ChEBI" id="CHEBI:60240"/>
        <label>1</label>
    </ligand>
</feature>
<feature type="binding site" evidence="1">
    <location>
        <position position="364"/>
    </location>
    <ligand>
        <name>a divalent metal cation</name>
        <dbReference type="ChEBI" id="CHEBI:60240"/>
        <label>1</label>
    </ligand>
</feature>
<feature type="binding site" evidence="1">
    <location>
        <position position="365"/>
    </location>
    <ligand>
        <name>3',5'-cyclic AMP</name>
        <dbReference type="ChEBI" id="CHEBI:58165"/>
    </ligand>
</feature>
<feature type="binding site" evidence="1">
    <location>
        <position position="365"/>
    </location>
    <ligand>
        <name>a divalent metal cation</name>
        <dbReference type="ChEBI" id="CHEBI:60240"/>
        <label>1</label>
    </ligand>
</feature>
<feature type="binding site" evidence="1">
    <location>
        <position position="365"/>
    </location>
    <ligand>
        <name>a divalent metal cation</name>
        <dbReference type="ChEBI" id="CHEBI:60240"/>
        <label>2</label>
    </ligand>
</feature>
<feature type="binding site" evidence="1">
    <location>
        <position position="482"/>
    </location>
    <ligand>
        <name>3',5'-cyclic AMP</name>
        <dbReference type="ChEBI" id="CHEBI:58165"/>
    </ligand>
</feature>
<feature type="binding site" evidence="1">
    <location>
        <position position="482"/>
    </location>
    <ligand>
        <name>a divalent metal cation</name>
        <dbReference type="ChEBI" id="CHEBI:60240"/>
        <label>1</label>
    </ligand>
</feature>
<feature type="binding site" evidence="1">
    <location>
        <position position="533"/>
    </location>
    <ligand>
        <name>3',5'-cyclic AMP</name>
        <dbReference type="ChEBI" id="CHEBI:58165"/>
    </ligand>
</feature>
<feature type="site" description="Binds AMP, but not cAMP" evidence="1">
    <location>
        <position position="485"/>
    </location>
</feature>
<comment type="function">
    <text evidence="1">Hydrolyzes the second messenger cAMP, which is a key regulator of many important physiological processes (By similarity). Vital for female fertility. Required for learning/memory (By similarity).</text>
</comment>
<comment type="catalytic activity">
    <reaction evidence="2">
        <text>3',5'-cyclic AMP + H2O = AMP + H(+)</text>
        <dbReference type="Rhea" id="RHEA:25277"/>
        <dbReference type="ChEBI" id="CHEBI:15377"/>
        <dbReference type="ChEBI" id="CHEBI:15378"/>
        <dbReference type="ChEBI" id="CHEBI:58165"/>
        <dbReference type="ChEBI" id="CHEBI:456215"/>
        <dbReference type="EC" id="3.1.4.53"/>
    </reaction>
</comment>
<comment type="cofactor">
    <cofactor evidence="1">
        <name>a divalent metal cation</name>
        <dbReference type="ChEBI" id="CHEBI:60240"/>
    </cofactor>
    <text evidence="1">Binds 2 divalent metal cations per subunit. Site 1 may preferentially bind zinc ions, while site 2 has a preference for magnesium and/or manganese ions.</text>
</comment>
<comment type="pathway">
    <text>Purine metabolism; 3',5'-cyclic AMP degradation; AMP from 3',5'-cyclic AMP: step 1/1.</text>
</comment>
<comment type="subunit">
    <text evidence="2">Monomer.</text>
</comment>
<comment type="alternative products">
    <event type="alternative splicing"/>
    <event type="alternative initiation"/>
    <isoform>
        <id>Q8IRU4-1</id>
        <name evidence="6">F</name>
        <sequence type="displayed"/>
    </isoform>
    <isoform>
        <id>Q9W4S9-2</id>
        <name evidence="6">G</name>
        <sequence type="external"/>
    </isoform>
    <isoform>
        <id>Q9W4T4-1</id>
        <name evidence="2">I</name>
        <name evidence="6">B</name>
        <name>S</name>
        <sequence type="external"/>
    </isoform>
    <isoform>
        <id>P12252-1</id>
        <name evidence="2">II</name>
        <name evidence="6">I</name>
        <name evidence="6">J</name>
        <sequence type="external"/>
    </isoform>
    <isoform>
        <id>P12252-7</id>
        <name>III</name>
        <name>E</name>
        <name>P</name>
        <sequence type="external"/>
    </isoform>
    <isoform>
        <id>P12252-3</id>
        <name evidence="2">IV</name>
        <name evidence="6">A</name>
        <sequence type="external"/>
    </isoform>
    <isoform>
        <id>P12252-4</id>
        <name evidence="2">V</name>
        <name evidence="6">C</name>
        <sequence type="external"/>
    </isoform>
    <isoform>
        <id>P12252-5</id>
        <name evidence="2">VI</name>
        <name evidence="6">D</name>
        <sequence type="external"/>
    </isoform>
    <isoform>
        <id>P12252-6</id>
        <name evidence="2">VII</name>
        <name evidence="6">L</name>
        <sequence type="external"/>
    </isoform>
    <isoform>
        <id>Q9W4S9-1</id>
        <name evidence="6">N</name>
        <sequence type="external"/>
    </isoform>
    <isoform>
        <id>P12252-8</id>
        <id>Q9W4T0-1</id>
        <name>R</name>
        <name>Q</name>
        <sequence type="external"/>
    </isoform>
    <isoform>
        <id>P12252-9</id>
        <name>U</name>
        <name>T</name>
        <sequence type="external"/>
    </isoform>
</comment>
<comment type="similarity">
    <text evidence="7">Belongs to the cyclic nucleotide phosphodiesterase family. PDE4 subfamily.</text>
</comment>
<dbReference type="EC" id="3.1.4.53"/>
<dbReference type="EMBL" id="AE014298">
    <property type="protein sequence ID" value="AAN09606.1"/>
    <property type="molecule type" value="Genomic_DNA"/>
</dbReference>
<dbReference type="RefSeq" id="NP_525061.2">
    <molecule id="Q8IRU4-1"/>
    <property type="nucleotide sequence ID" value="NM_080322.3"/>
</dbReference>
<dbReference type="SMR" id="Q8IRU4"/>
<dbReference type="BioGRID" id="57834">
    <property type="interactions" value="19"/>
</dbReference>
<dbReference type="IntAct" id="Q8IRU4">
    <property type="interactions" value="1"/>
</dbReference>
<dbReference type="DNASU" id="31309"/>
<dbReference type="EnsemblMetazoa" id="FBtr0070521">
    <molecule id="Q8IRU4-1"/>
    <property type="protein sequence ID" value="FBpp0070497"/>
    <property type="gene ID" value="FBgn0000479"/>
</dbReference>
<dbReference type="GeneID" id="31309"/>
<dbReference type="KEGG" id="dme:Dmel_CG32498"/>
<dbReference type="UCSC" id="CG32498-RA">
    <molecule id="Q8IRU4-1"/>
    <property type="organism name" value="d. melanogaster"/>
</dbReference>
<dbReference type="AGR" id="FB:FBgn0000479"/>
<dbReference type="CTD" id="31309"/>
<dbReference type="FlyBase" id="FBgn0000479">
    <property type="gene designation" value="dnc"/>
</dbReference>
<dbReference type="VEuPathDB" id="VectorBase:FBgn0000479"/>
<dbReference type="GeneTree" id="ENSGT00940000155190"/>
<dbReference type="OrthoDB" id="189220at2759"/>
<dbReference type="UniPathway" id="UPA00762">
    <property type="reaction ID" value="UER00747"/>
</dbReference>
<dbReference type="BioGRID-ORCS" id="31309">
    <property type="hits" value="1 hit in 3 CRISPR screens"/>
</dbReference>
<dbReference type="ChiTaRS" id="dnc">
    <property type="organism name" value="fly"/>
</dbReference>
<dbReference type="GenomeRNAi" id="31309"/>
<dbReference type="Proteomes" id="UP000000803">
    <property type="component" value="Chromosome X"/>
</dbReference>
<dbReference type="Bgee" id="FBgn0000479">
    <property type="expression patterns" value="Expressed in muscle cell in antenna and 285 other cell types or tissues"/>
</dbReference>
<dbReference type="ExpressionAtlas" id="Q8IRU4">
    <property type="expression patterns" value="baseline and differential"/>
</dbReference>
<dbReference type="GO" id="GO:0045202">
    <property type="term" value="C:synapse"/>
    <property type="evidence" value="ECO:0007669"/>
    <property type="project" value="GOC"/>
</dbReference>
<dbReference type="GO" id="GO:0004115">
    <property type="term" value="F:3',5'-cyclic-AMP phosphodiesterase activity"/>
    <property type="evidence" value="ECO:0000250"/>
    <property type="project" value="FlyBase"/>
</dbReference>
<dbReference type="GO" id="GO:0047555">
    <property type="term" value="F:3',5'-cyclic-GMP phosphodiesterase activity"/>
    <property type="evidence" value="ECO:0000318"/>
    <property type="project" value="GO_Central"/>
</dbReference>
<dbReference type="GO" id="GO:0046872">
    <property type="term" value="F:metal ion binding"/>
    <property type="evidence" value="ECO:0007669"/>
    <property type="project" value="UniProtKB-KW"/>
</dbReference>
<dbReference type="GO" id="GO:0007615">
    <property type="term" value="P:anesthesia-resistant memory"/>
    <property type="evidence" value="ECO:0000315"/>
    <property type="project" value="FlyBase"/>
</dbReference>
<dbReference type="GO" id="GO:0008306">
    <property type="term" value="P:associative learning"/>
    <property type="evidence" value="ECO:0000315"/>
    <property type="project" value="FlyBase"/>
</dbReference>
<dbReference type="GO" id="GO:0048675">
    <property type="term" value="P:axon extension"/>
    <property type="evidence" value="ECO:0000315"/>
    <property type="project" value="FlyBase"/>
</dbReference>
<dbReference type="GO" id="GO:0006198">
    <property type="term" value="P:cAMP catabolic process"/>
    <property type="evidence" value="ECO:0007669"/>
    <property type="project" value="UniProtKB-UniPathway"/>
</dbReference>
<dbReference type="GO" id="GO:0019933">
    <property type="term" value="P:cAMP-mediated signaling"/>
    <property type="evidence" value="ECO:0000318"/>
    <property type="project" value="GO_Central"/>
</dbReference>
<dbReference type="GO" id="GO:0007268">
    <property type="term" value="P:chemical synaptic transmission"/>
    <property type="evidence" value="ECO:0000315"/>
    <property type="project" value="FlyBase"/>
</dbReference>
<dbReference type="GO" id="GO:0007623">
    <property type="term" value="P:circadian rhythm"/>
    <property type="evidence" value="ECO:0000304"/>
    <property type="project" value="FlyBase"/>
</dbReference>
<dbReference type="GO" id="GO:0001661">
    <property type="term" value="P:conditioned taste aversion"/>
    <property type="evidence" value="ECO:0000315"/>
    <property type="project" value="FlyBase"/>
</dbReference>
<dbReference type="GO" id="GO:0007619">
    <property type="term" value="P:courtship behavior"/>
    <property type="evidence" value="ECO:0000304"/>
    <property type="project" value="FlyBase"/>
</dbReference>
<dbReference type="GO" id="GO:0007612">
    <property type="term" value="P:learning"/>
    <property type="evidence" value="ECO:0000315"/>
    <property type="project" value="FlyBase"/>
</dbReference>
<dbReference type="GO" id="GO:0007617">
    <property type="term" value="P:mating behavior"/>
    <property type="evidence" value="ECO:0000304"/>
    <property type="project" value="FlyBase"/>
</dbReference>
<dbReference type="GO" id="GO:0007613">
    <property type="term" value="P:memory"/>
    <property type="evidence" value="ECO:0000315"/>
    <property type="project" value="FlyBase"/>
</dbReference>
<dbReference type="GO" id="GO:0046958">
    <property type="term" value="P:nonassociative learning"/>
    <property type="evidence" value="ECO:0000304"/>
    <property type="project" value="FlyBase"/>
</dbReference>
<dbReference type="GO" id="GO:0008355">
    <property type="term" value="P:olfactory learning"/>
    <property type="evidence" value="ECO:0000304"/>
    <property type="project" value="FlyBase"/>
</dbReference>
<dbReference type="GO" id="GO:0007614">
    <property type="term" value="P:short-term memory"/>
    <property type="evidence" value="ECO:0000315"/>
    <property type="project" value="FlyBase"/>
</dbReference>
<dbReference type="GO" id="GO:0040040">
    <property type="term" value="P:thermosensory behavior"/>
    <property type="evidence" value="ECO:0000315"/>
    <property type="project" value="FlyBase"/>
</dbReference>
<dbReference type="CDD" id="cd00077">
    <property type="entry name" value="HDc"/>
    <property type="match status" value="1"/>
</dbReference>
<dbReference type="FunFam" id="1.10.1300.10:FF:000001">
    <property type="entry name" value="Phosphodiesterase"/>
    <property type="match status" value="1"/>
</dbReference>
<dbReference type="Gene3D" id="1.10.1300.10">
    <property type="entry name" value="3'5'-cyclic nucleotide phosphodiesterase, catalytic domain"/>
    <property type="match status" value="1"/>
</dbReference>
<dbReference type="InterPro" id="IPR003607">
    <property type="entry name" value="HD/PDEase_dom"/>
</dbReference>
<dbReference type="InterPro" id="IPR040844">
    <property type="entry name" value="PDE4_UCR"/>
</dbReference>
<dbReference type="InterPro" id="IPR023088">
    <property type="entry name" value="PDEase"/>
</dbReference>
<dbReference type="InterPro" id="IPR002073">
    <property type="entry name" value="PDEase_catalytic_dom"/>
</dbReference>
<dbReference type="InterPro" id="IPR036971">
    <property type="entry name" value="PDEase_catalytic_dom_sf"/>
</dbReference>
<dbReference type="InterPro" id="IPR023174">
    <property type="entry name" value="PDEase_CS"/>
</dbReference>
<dbReference type="PANTHER" id="PTHR11347">
    <property type="entry name" value="CYCLIC NUCLEOTIDE PHOSPHODIESTERASE"/>
    <property type="match status" value="1"/>
</dbReference>
<dbReference type="Pfam" id="PF18100">
    <property type="entry name" value="PDE4_UCR"/>
    <property type="match status" value="1"/>
</dbReference>
<dbReference type="Pfam" id="PF00233">
    <property type="entry name" value="PDEase_I"/>
    <property type="match status" value="1"/>
</dbReference>
<dbReference type="PRINTS" id="PR00387">
    <property type="entry name" value="PDIESTERASE1"/>
</dbReference>
<dbReference type="SUPFAM" id="SSF109604">
    <property type="entry name" value="HD-domain/PDEase-like"/>
    <property type="match status" value="1"/>
</dbReference>
<dbReference type="PROSITE" id="PS00126">
    <property type="entry name" value="PDEASE_I_1"/>
    <property type="match status" value="1"/>
</dbReference>
<dbReference type="PROSITE" id="PS51845">
    <property type="entry name" value="PDEASE_I_2"/>
    <property type="match status" value="1"/>
</dbReference>
<evidence type="ECO:0000250" key="1"/>
<evidence type="ECO:0000250" key="2">
    <source>
        <dbReference type="UniProtKB" id="P12252"/>
    </source>
</evidence>
<evidence type="ECO:0000255" key="3">
    <source>
        <dbReference type="PROSITE-ProRule" id="PRU01192"/>
    </source>
</evidence>
<evidence type="ECO:0000256" key="4">
    <source>
        <dbReference type="SAM" id="MobiDB-lite"/>
    </source>
</evidence>
<evidence type="ECO:0000269" key="5">
    <source>
    </source>
</evidence>
<evidence type="ECO:0000303" key="6">
    <source>
    </source>
</evidence>
<evidence type="ECO:0000305" key="7"/>
<evidence type="ECO:0000312" key="8">
    <source>
        <dbReference type="EMBL" id="AAN09606.1"/>
    </source>
</evidence>